<reference key="1">
    <citation type="submission" date="2005-08" db="EMBL/GenBank/DDBJ databases">
        <authorList>
            <consortium name="NIH - Mammalian Gene Collection (MGC) project"/>
        </authorList>
    </citation>
    <scope>NUCLEOTIDE SEQUENCE [LARGE SCALE MRNA]</scope>
    <source>
        <strain>Hereford</strain>
        <tissue>Testis</tissue>
    </source>
</reference>
<organism>
    <name type="scientific">Bos taurus</name>
    <name type="common">Bovine</name>
    <dbReference type="NCBI Taxonomy" id="9913"/>
    <lineage>
        <taxon>Eukaryota</taxon>
        <taxon>Metazoa</taxon>
        <taxon>Chordata</taxon>
        <taxon>Craniata</taxon>
        <taxon>Vertebrata</taxon>
        <taxon>Euteleostomi</taxon>
        <taxon>Mammalia</taxon>
        <taxon>Eutheria</taxon>
        <taxon>Laurasiatheria</taxon>
        <taxon>Artiodactyla</taxon>
        <taxon>Ruminantia</taxon>
        <taxon>Pecora</taxon>
        <taxon>Bovidae</taxon>
        <taxon>Bovinae</taxon>
        <taxon>Bos</taxon>
    </lineage>
</organism>
<gene>
    <name type="primary">ISCA1</name>
    <name type="synonym">HBLD2</name>
</gene>
<name>ISCA1_BOVIN</name>
<comment type="function">
    <text evidence="2">Involved in the maturation of mitochondrial 4Fe-4S proteins functioning late in the iron-sulfur cluster assembly pathway. Probably involved in the binding of an intermediate of Fe/S cluster assembly.</text>
</comment>
<comment type="subunit">
    <text evidence="2">Interacts with CRY2, but not with CRY1 (in vitro).</text>
</comment>
<comment type="subcellular location">
    <subcellularLocation>
        <location evidence="2">Mitochondrion</location>
    </subcellularLocation>
</comment>
<comment type="similarity">
    <text evidence="4">Belongs to the HesB/IscA family.</text>
</comment>
<keyword id="KW-0408">Iron</keyword>
<keyword id="KW-0411">Iron-sulfur</keyword>
<keyword id="KW-0479">Metal-binding</keyword>
<keyword id="KW-0496">Mitochondrion</keyword>
<keyword id="KW-1185">Reference proteome</keyword>
<keyword id="KW-0809">Transit peptide</keyword>
<dbReference type="EMBL" id="BC102863">
    <property type="protein sequence ID" value="AAI02864.1"/>
    <property type="molecule type" value="mRNA"/>
</dbReference>
<dbReference type="RefSeq" id="NP_001029642.1">
    <property type="nucleotide sequence ID" value="NM_001034470.2"/>
</dbReference>
<dbReference type="SMR" id="Q3SZG8"/>
<dbReference type="FunCoup" id="Q3SZG8">
    <property type="interactions" value="1323"/>
</dbReference>
<dbReference type="STRING" id="9913.ENSBTAP00000060430"/>
<dbReference type="PaxDb" id="9913-ENSBTAP00000056081"/>
<dbReference type="Ensembl" id="ENSBTAT00000079550.1">
    <property type="protein sequence ID" value="ENSBTAP00000060430.1"/>
    <property type="gene ID" value="ENSBTAG00000053156.2"/>
</dbReference>
<dbReference type="GeneID" id="514652"/>
<dbReference type="KEGG" id="bta:514652"/>
<dbReference type="CTD" id="81689"/>
<dbReference type="VEuPathDB" id="HostDB:ENSBTAG00000053156"/>
<dbReference type="eggNOG" id="KOG1120">
    <property type="taxonomic scope" value="Eukaryota"/>
</dbReference>
<dbReference type="GeneTree" id="ENSGT00490000043385"/>
<dbReference type="HOGENOM" id="CLU_069054_4_0_1"/>
<dbReference type="InParanoid" id="Q3SZG8"/>
<dbReference type="OMA" id="LYIYGMQ"/>
<dbReference type="OrthoDB" id="333486at2759"/>
<dbReference type="TreeFam" id="TF314956"/>
<dbReference type="Reactome" id="R-BTA-1362409">
    <property type="pathway name" value="Mitochondrial iron-sulfur cluster biogenesis"/>
</dbReference>
<dbReference type="Reactome" id="R-BTA-9854311">
    <property type="pathway name" value="Maturation of TCA enzymes and regulation of TCA cycle"/>
</dbReference>
<dbReference type="Proteomes" id="UP000009136">
    <property type="component" value="Chromosome 8"/>
</dbReference>
<dbReference type="Bgee" id="ENSBTAG00000053156">
    <property type="expression patterns" value="Expressed in occipital lobe and 102 other cell types or tissues"/>
</dbReference>
<dbReference type="GO" id="GO:0005737">
    <property type="term" value="C:cytoplasm"/>
    <property type="evidence" value="ECO:0000318"/>
    <property type="project" value="GO_Central"/>
</dbReference>
<dbReference type="GO" id="GO:0120510">
    <property type="term" value="C:mitochondrial [4Fe-4S] assembly complex"/>
    <property type="evidence" value="ECO:0007669"/>
    <property type="project" value="Ensembl"/>
</dbReference>
<dbReference type="GO" id="GO:0005739">
    <property type="term" value="C:mitochondrion"/>
    <property type="evidence" value="ECO:0000318"/>
    <property type="project" value="GO_Central"/>
</dbReference>
<dbReference type="GO" id="GO:0051537">
    <property type="term" value="F:2 iron, 2 sulfur cluster binding"/>
    <property type="evidence" value="ECO:0000318"/>
    <property type="project" value="GO_Central"/>
</dbReference>
<dbReference type="GO" id="GO:0046872">
    <property type="term" value="F:metal ion binding"/>
    <property type="evidence" value="ECO:0007669"/>
    <property type="project" value="UniProtKB-KW"/>
</dbReference>
<dbReference type="GO" id="GO:0016226">
    <property type="term" value="P:iron-sulfur cluster assembly"/>
    <property type="evidence" value="ECO:0000318"/>
    <property type="project" value="GO_Central"/>
</dbReference>
<dbReference type="FunFam" id="2.60.300.12:FF:000001">
    <property type="entry name" value="Iron-binding protein IscA"/>
    <property type="match status" value="1"/>
</dbReference>
<dbReference type="Gene3D" id="2.60.300.12">
    <property type="entry name" value="HesB-like domain"/>
    <property type="match status" value="1"/>
</dbReference>
<dbReference type="InterPro" id="IPR050322">
    <property type="entry name" value="Fe-S_cluster_asmbl/transfer"/>
</dbReference>
<dbReference type="InterPro" id="IPR000361">
    <property type="entry name" value="FeS_biogenesis"/>
</dbReference>
<dbReference type="InterPro" id="IPR016092">
    <property type="entry name" value="FeS_cluster_insertion"/>
</dbReference>
<dbReference type="InterPro" id="IPR017870">
    <property type="entry name" value="FeS_cluster_insertion_CS"/>
</dbReference>
<dbReference type="InterPro" id="IPR035903">
    <property type="entry name" value="HesB-like_dom_sf"/>
</dbReference>
<dbReference type="NCBIfam" id="TIGR00049">
    <property type="entry name" value="iron-sulfur cluster assembly accessory protein"/>
    <property type="match status" value="1"/>
</dbReference>
<dbReference type="PANTHER" id="PTHR10072:SF41">
    <property type="entry name" value="IRON-SULFUR CLUSTER ASSEMBLY 1 HOMOLOG, MITOCHONDRIAL"/>
    <property type="match status" value="1"/>
</dbReference>
<dbReference type="PANTHER" id="PTHR10072">
    <property type="entry name" value="IRON-SULFUR CLUSTER ASSEMBLY PROTEIN"/>
    <property type="match status" value="1"/>
</dbReference>
<dbReference type="Pfam" id="PF01521">
    <property type="entry name" value="Fe-S_biosyn"/>
    <property type="match status" value="1"/>
</dbReference>
<dbReference type="SUPFAM" id="SSF89360">
    <property type="entry name" value="HesB-like domain"/>
    <property type="match status" value="1"/>
</dbReference>
<dbReference type="PROSITE" id="PS01152">
    <property type="entry name" value="HESB"/>
    <property type="match status" value="1"/>
</dbReference>
<feature type="transit peptide" description="Mitochondrion" evidence="3">
    <location>
        <begin position="1"/>
        <end position="12"/>
    </location>
</feature>
<feature type="chain" id="PRO_0000277586" description="Iron-sulfur cluster assembly 1 homolog, mitochondrial">
    <location>
        <begin position="13"/>
        <end position="129"/>
    </location>
</feature>
<feature type="binding site" evidence="1">
    <location>
        <position position="57"/>
    </location>
    <ligand>
        <name>Fe cation</name>
        <dbReference type="ChEBI" id="CHEBI:24875"/>
    </ligand>
</feature>
<feature type="binding site" evidence="1">
    <location>
        <position position="121"/>
    </location>
    <ligand>
        <name>Fe cation</name>
        <dbReference type="ChEBI" id="CHEBI:24875"/>
    </ligand>
</feature>
<feature type="binding site" evidence="1">
    <location>
        <position position="123"/>
    </location>
    <ligand>
        <name>Fe cation</name>
        <dbReference type="ChEBI" id="CHEBI:24875"/>
    </ligand>
</feature>
<protein>
    <recommendedName>
        <fullName>Iron-sulfur cluster assembly 1 homolog, mitochondrial</fullName>
    </recommendedName>
    <alternativeName>
        <fullName>HESB-like domain-containing protein 2</fullName>
    </alternativeName>
    <alternativeName>
        <fullName>Iron-sulfur assembly protein IscA</fullName>
    </alternativeName>
</protein>
<evidence type="ECO:0000250" key="1">
    <source>
        <dbReference type="UniProtKB" id="P0AAC8"/>
    </source>
</evidence>
<evidence type="ECO:0000250" key="2">
    <source>
        <dbReference type="UniProtKB" id="Q9BUE6"/>
    </source>
</evidence>
<evidence type="ECO:0000255" key="3"/>
<evidence type="ECO:0000305" key="4"/>
<proteinExistence type="evidence at transcript level"/>
<accession>Q3SZG8</accession>
<sequence length="129" mass="14179">MSASLVRATVRAVSKRKLQPTRAALTLTPSAVNKIKQLLKDKPEHVGVKVGVRTRGCNGLSYTLEYTKTKGDSDEEVIQDGVRVFIEKKAQLTLLGTEMDYVEDKLSSEFVFNNPNIKGTCGCGESFNI</sequence>